<sequence>MERWWFNSMLFKKEFECRCGLNKSTESLGSIENASEGDEPDIKDRTKNIQSWGGRDDSSYSKVDHLFVVKDIRNFISDDTFLVKDSNGDNFSIYFDIENQIFEIDNNHSFRSELKNTYWNSSYLNNGSTSEDTYYNHYMYDTQYSWNNHINSCIDSYLQSQIWIETSIVSGGDNYSDSYIYSSICGESRNNSEGEVSDIQTHVKGSDFTIIESSNDLDVTQKYRHLWVQCENCYGLNYKKFLKSKMNICEQCGYHLKMNSSERIELSIDPGTWDPMDEDMASLDPIEFHSEEEPYKDRIDSYQKKTGLTEAVQTGIGQLNGIPVAVGVMDFQFMGGSMGSVVGEKITRLIEYATKELLPLIIVCASGGARMQEGSLSLMQMAKISSALYDYQSNKKLFYVSILTSPTTGGVTASFGMLGDIIIAEPNAYIAFAGKRVIEQTLNTTVPEGSQAAEYLFQKGLFDLIVPRNLLKSVLSELFKFHAFVPLNQNETEH</sequence>
<feature type="chain" id="PRO_0000359132" description="Acetyl-coenzyme A carboxylase carboxyl transferase subunit beta, chloroplastic">
    <location>
        <begin position="1"/>
        <end position="494"/>
    </location>
</feature>
<feature type="domain" description="CoA carboxyltransferase N-terminal" evidence="3">
    <location>
        <begin position="226"/>
        <end position="494"/>
    </location>
</feature>
<feature type="zinc finger region" description="C4-type" evidence="2">
    <location>
        <begin position="230"/>
        <end position="252"/>
    </location>
</feature>
<feature type="binding site" evidence="2">
    <location>
        <position position="230"/>
    </location>
    <ligand>
        <name>Zn(2+)</name>
        <dbReference type="ChEBI" id="CHEBI:29105"/>
    </ligand>
</feature>
<feature type="binding site" evidence="2">
    <location>
        <position position="233"/>
    </location>
    <ligand>
        <name>Zn(2+)</name>
        <dbReference type="ChEBI" id="CHEBI:29105"/>
    </ligand>
</feature>
<feature type="binding site" evidence="2">
    <location>
        <position position="249"/>
    </location>
    <ligand>
        <name>Zn(2+)</name>
        <dbReference type="ChEBI" id="CHEBI:29105"/>
    </ligand>
</feature>
<feature type="binding site" evidence="2">
    <location>
        <position position="252"/>
    </location>
    <ligand>
        <name>Zn(2+)</name>
        <dbReference type="ChEBI" id="CHEBI:29105"/>
    </ligand>
</feature>
<comment type="function">
    <text evidence="2">Component of the acetyl coenzyme A carboxylase (ACC) complex. Biotin carboxylase (BC) catalyzes the carboxylation of biotin on its carrier protein (BCCP) and then the CO(2) group is transferred by the transcarboxylase to acetyl-CoA to form malonyl-CoA.</text>
</comment>
<comment type="catalytic activity">
    <reaction evidence="2">
        <text>N(6)-carboxybiotinyl-L-lysyl-[protein] + acetyl-CoA = N(6)-biotinyl-L-lysyl-[protein] + malonyl-CoA</text>
        <dbReference type="Rhea" id="RHEA:54728"/>
        <dbReference type="Rhea" id="RHEA-COMP:10505"/>
        <dbReference type="Rhea" id="RHEA-COMP:10506"/>
        <dbReference type="ChEBI" id="CHEBI:57288"/>
        <dbReference type="ChEBI" id="CHEBI:57384"/>
        <dbReference type="ChEBI" id="CHEBI:83144"/>
        <dbReference type="ChEBI" id="CHEBI:83145"/>
        <dbReference type="EC" id="2.1.3.15"/>
    </reaction>
</comment>
<comment type="cofactor">
    <cofactor evidence="2">
        <name>Zn(2+)</name>
        <dbReference type="ChEBI" id="CHEBI:29105"/>
    </cofactor>
    <text evidence="2">Binds 1 zinc ion per subunit.</text>
</comment>
<comment type="pathway">
    <text evidence="2">Lipid metabolism; malonyl-CoA biosynthesis; malonyl-CoA from acetyl-CoA: step 1/1.</text>
</comment>
<comment type="subunit">
    <text evidence="1">Acetyl-CoA carboxylase is a heterohexamer composed of biotin carboxyl carrier protein, biotin carboxylase and 2 subunits each of ACCase subunit alpha and ACCase plastid-coded subunit beta (accD).</text>
</comment>
<comment type="subcellular location">
    <subcellularLocation>
        <location evidence="2">Plastid</location>
        <location evidence="2">Chloroplast stroma</location>
    </subcellularLocation>
</comment>
<comment type="similarity">
    <text evidence="2">Belongs to the AccD/PCCB family.</text>
</comment>
<comment type="sequence caution" evidence="4">
    <conflict type="erroneous initiation">
        <sequence resource="EMBL-CDS" id="ABJ89688"/>
    </conflict>
    <text>Extended N-terminus.</text>
</comment>
<evidence type="ECO:0000250" key="1"/>
<evidence type="ECO:0000255" key="2">
    <source>
        <dbReference type="HAMAP-Rule" id="MF_01395"/>
    </source>
</evidence>
<evidence type="ECO:0000255" key="3">
    <source>
        <dbReference type="PROSITE-ProRule" id="PRU01136"/>
    </source>
</evidence>
<evidence type="ECO:0000305" key="4"/>
<accession>A0A344</accession>
<name>ACCD_COFAR</name>
<keyword id="KW-0067">ATP-binding</keyword>
<keyword id="KW-0150">Chloroplast</keyword>
<keyword id="KW-0275">Fatty acid biosynthesis</keyword>
<keyword id="KW-0276">Fatty acid metabolism</keyword>
<keyword id="KW-0444">Lipid biosynthesis</keyword>
<keyword id="KW-0443">Lipid metabolism</keyword>
<keyword id="KW-0479">Metal-binding</keyword>
<keyword id="KW-0547">Nucleotide-binding</keyword>
<keyword id="KW-0934">Plastid</keyword>
<keyword id="KW-1185">Reference proteome</keyword>
<keyword id="KW-0808">Transferase</keyword>
<keyword id="KW-0862">Zinc</keyword>
<keyword id="KW-0863">Zinc-finger</keyword>
<protein>
    <recommendedName>
        <fullName evidence="2">Acetyl-coenzyme A carboxylase carboxyl transferase subunit beta, chloroplastic</fullName>
        <shortName evidence="2">ACCase subunit beta</shortName>
        <shortName evidence="2">Acetyl-CoA carboxylase carboxyltransferase subunit beta</shortName>
        <ecNumber evidence="2">2.1.3.15</ecNumber>
    </recommendedName>
</protein>
<gene>
    <name evidence="2" type="primary">accD</name>
</gene>
<reference key="1">
    <citation type="journal article" date="2007" name="Plant Biotechnol. J.">
        <title>The complete nucleotide sequence of the coffee (Coffea arabica L.) chloroplast genome: organization and implications for biotechnology and phylogenetic relationships amongst angiosperms.</title>
        <authorList>
            <person name="Samson N."/>
            <person name="Bausher M.G."/>
            <person name="Lee S.-B."/>
            <person name="Jansen R.K."/>
            <person name="Daniell H."/>
        </authorList>
    </citation>
    <scope>NUCLEOTIDE SEQUENCE [LARGE SCALE GENOMIC DNA]</scope>
</reference>
<geneLocation type="chloroplast"/>
<proteinExistence type="inferred from homology"/>
<organism>
    <name type="scientific">Coffea arabica</name>
    <name type="common">Arabian coffee</name>
    <dbReference type="NCBI Taxonomy" id="13443"/>
    <lineage>
        <taxon>Eukaryota</taxon>
        <taxon>Viridiplantae</taxon>
        <taxon>Streptophyta</taxon>
        <taxon>Embryophyta</taxon>
        <taxon>Tracheophyta</taxon>
        <taxon>Spermatophyta</taxon>
        <taxon>Magnoliopsida</taxon>
        <taxon>eudicotyledons</taxon>
        <taxon>Gunneridae</taxon>
        <taxon>Pentapetalae</taxon>
        <taxon>asterids</taxon>
        <taxon>lamiids</taxon>
        <taxon>Gentianales</taxon>
        <taxon>Rubiaceae</taxon>
        <taxon>Ixoroideae</taxon>
        <taxon>Gardenieae complex</taxon>
        <taxon>Bertiereae - Coffeeae clade</taxon>
        <taxon>Coffeeae</taxon>
        <taxon>Coffea</taxon>
    </lineage>
</organism>
<dbReference type="EC" id="2.1.3.15" evidence="2"/>
<dbReference type="EMBL" id="EF044213">
    <property type="protein sequence ID" value="ABJ89688.1"/>
    <property type="status" value="ALT_INIT"/>
    <property type="molecule type" value="Genomic_DNA"/>
</dbReference>
<dbReference type="RefSeq" id="YP_817491.1">
    <property type="nucleotide sequence ID" value="NC_008535.1"/>
</dbReference>
<dbReference type="SMR" id="A0A344"/>
<dbReference type="GeneID" id="4421772"/>
<dbReference type="OrthoDB" id="10053020at2759"/>
<dbReference type="UniPathway" id="UPA00655">
    <property type="reaction ID" value="UER00711"/>
</dbReference>
<dbReference type="Proteomes" id="UP000515148">
    <property type="component" value="Chloroplast Pltd"/>
</dbReference>
<dbReference type="GO" id="GO:0009317">
    <property type="term" value="C:acetyl-CoA carboxylase complex"/>
    <property type="evidence" value="ECO:0007669"/>
    <property type="project" value="InterPro"/>
</dbReference>
<dbReference type="GO" id="GO:0009570">
    <property type="term" value="C:chloroplast stroma"/>
    <property type="evidence" value="ECO:0007669"/>
    <property type="project" value="UniProtKB-SubCell"/>
</dbReference>
<dbReference type="GO" id="GO:0003989">
    <property type="term" value="F:acetyl-CoA carboxylase activity"/>
    <property type="evidence" value="ECO:0007669"/>
    <property type="project" value="InterPro"/>
</dbReference>
<dbReference type="GO" id="GO:0005524">
    <property type="term" value="F:ATP binding"/>
    <property type="evidence" value="ECO:0007669"/>
    <property type="project" value="UniProtKB-KW"/>
</dbReference>
<dbReference type="GO" id="GO:0016743">
    <property type="term" value="F:carboxyl- or carbamoyltransferase activity"/>
    <property type="evidence" value="ECO:0007669"/>
    <property type="project" value="UniProtKB-UniRule"/>
</dbReference>
<dbReference type="GO" id="GO:0008270">
    <property type="term" value="F:zinc ion binding"/>
    <property type="evidence" value="ECO:0007669"/>
    <property type="project" value="UniProtKB-UniRule"/>
</dbReference>
<dbReference type="GO" id="GO:0006633">
    <property type="term" value="P:fatty acid biosynthetic process"/>
    <property type="evidence" value="ECO:0007669"/>
    <property type="project" value="UniProtKB-KW"/>
</dbReference>
<dbReference type="GO" id="GO:2001295">
    <property type="term" value="P:malonyl-CoA biosynthetic process"/>
    <property type="evidence" value="ECO:0007669"/>
    <property type="project" value="UniProtKB-UniRule"/>
</dbReference>
<dbReference type="Gene3D" id="3.90.226.10">
    <property type="entry name" value="2-enoyl-CoA Hydratase, Chain A, domain 1"/>
    <property type="match status" value="1"/>
</dbReference>
<dbReference type="HAMAP" id="MF_01395">
    <property type="entry name" value="AcetylCoA_CT_beta"/>
    <property type="match status" value="1"/>
</dbReference>
<dbReference type="InterPro" id="IPR034733">
    <property type="entry name" value="AcCoA_carboxyl_beta"/>
</dbReference>
<dbReference type="InterPro" id="IPR000438">
    <property type="entry name" value="Acetyl_CoA_COase_Trfase_b_su"/>
</dbReference>
<dbReference type="InterPro" id="IPR029045">
    <property type="entry name" value="ClpP/crotonase-like_dom_sf"/>
</dbReference>
<dbReference type="InterPro" id="IPR011762">
    <property type="entry name" value="COA_CT_N"/>
</dbReference>
<dbReference type="NCBIfam" id="TIGR00515">
    <property type="entry name" value="accD"/>
    <property type="match status" value="1"/>
</dbReference>
<dbReference type="PANTHER" id="PTHR42995">
    <property type="entry name" value="ACETYL-COENZYME A CARBOXYLASE CARBOXYL TRANSFERASE SUBUNIT BETA, CHLOROPLASTIC"/>
    <property type="match status" value="1"/>
</dbReference>
<dbReference type="PANTHER" id="PTHR42995:SF5">
    <property type="entry name" value="ACETYL-COENZYME A CARBOXYLASE CARBOXYL TRANSFERASE SUBUNIT BETA, CHLOROPLASTIC"/>
    <property type="match status" value="1"/>
</dbReference>
<dbReference type="Pfam" id="PF01039">
    <property type="entry name" value="Carboxyl_trans"/>
    <property type="match status" value="1"/>
</dbReference>
<dbReference type="PRINTS" id="PR01070">
    <property type="entry name" value="ACCCTRFRASEB"/>
</dbReference>
<dbReference type="SUPFAM" id="SSF52096">
    <property type="entry name" value="ClpP/crotonase"/>
    <property type="match status" value="1"/>
</dbReference>
<dbReference type="PROSITE" id="PS50980">
    <property type="entry name" value="COA_CT_NTER"/>
    <property type="match status" value="1"/>
</dbReference>